<evidence type="ECO:0000250" key="1"/>
<evidence type="ECO:0000250" key="2">
    <source>
        <dbReference type="UniProtKB" id="O43677"/>
    </source>
</evidence>
<evidence type="ECO:0000250" key="3">
    <source>
        <dbReference type="UniProtKB" id="Q02376"/>
    </source>
</evidence>
<evidence type="ECO:0000255" key="4"/>
<evidence type="ECO:0000305" key="5"/>
<keyword id="KW-0249">Electron transport</keyword>
<keyword id="KW-0472">Membrane</keyword>
<keyword id="KW-0496">Mitochondrion</keyword>
<keyword id="KW-0999">Mitochondrion inner membrane</keyword>
<keyword id="KW-1185">Reference proteome</keyword>
<keyword id="KW-0679">Respiratory chain</keyword>
<keyword id="KW-0809">Transit peptide</keyword>
<keyword id="KW-0812">Transmembrane</keyword>
<keyword id="KW-1133">Transmembrane helix</keyword>
<keyword id="KW-0813">Transport</keyword>
<sequence>MAPSALLRPVSRLLAPARLPSGRASARSKFYVREPLNAKPDWLKVGFTLGTTVFLWVYLIKQHNEDILECKRRNGLE</sequence>
<accession>P0CB69</accession>
<accession>Q0MQF4</accession>
<accession>Q5R7L5</accession>
<accession>Q5R8I1</accession>
<proteinExistence type="inferred from homology"/>
<gene>
    <name type="primary">NDUFC1</name>
</gene>
<comment type="function">
    <text evidence="2">Accessory subunit of the mitochondrial membrane respiratory chain NADH dehydrogenase (Complex I), that is believed not to be involved in catalysis. Complex I functions in the transfer of electrons from NADH to the respiratory chain. The immediate electron acceptor for the enzyme is believed to be ubiquinone.</text>
</comment>
<comment type="subunit">
    <text evidence="2">Complex I is composed of 45 different subunits.</text>
</comment>
<comment type="subcellular location">
    <subcellularLocation>
        <location evidence="3">Mitochondrion inner membrane</location>
        <topology evidence="3">Single-pass membrane protein</topology>
        <orientation evidence="3">Matrix side</orientation>
    </subcellularLocation>
</comment>
<comment type="similarity">
    <text evidence="5">Belongs to the complex I NDUFC1 subunit family.</text>
</comment>
<feature type="transit peptide" description="Mitochondrion" evidence="1">
    <location>
        <begin position="1"/>
        <end position="28"/>
    </location>
</feature>
<feature type="chain" id="PRO_0000250209" description="NADH dehydrogenase [ubiquinone] 1 subunit C1, mitochondrial">
    <location>
        <begin position="29"/>
        <end position="77"/>
    </location>
</feature>
<feature type="transmembrane region" description="Helical" evidence="4">
    <location>
        <begin position="42"/>
        <end position="60"/>
    </location>
</feature>
<feature type="sequence conflict" description="In Ref. 1; CAH91929." evidence="5" ref="1">
    <original>R</original>
    <variation>G</variation>
    <location>
        <position position="18"/>
    </location>
</feature>
<feature type="sequence conflict" description="In Ref. 1; CAH91929." evidence="5" ref="1">
    <original>C</original>
    <variation>Y</variation>
    <location>
        <position position="70"/>
    </location>
</feature>
<organism>
    <name type="scientific">Pongo abelii</name>
    <name type="common">Sumatran orangutan</name>
    <name type="synonym">Pongo pygmaeus abelii</name>
    <dbReference type="NCBI Taxonomy" id="9601"/>
    <lineage>
        <taxon>Eukaryota</taxon>
        <taxon>Metazoa</taxon>
        <taxon>Chordata</taxon>
        <taxon>Craniata</taxon>
        <taxon>Vertebrata</taxon>
        <taxon>Euteleostomi</taxon>
        <taxon>Mammalia</taxon>
        <taxon>Eutheria</taxon>
        <taxon>Euarchontoglires</taxon>
        <taxon>Primates</taxon>
        <taxon>Haplorrhini</taxon>
        <taxon>Catarrhini</taxon>
        <taxon>Hominidae</taxon>
        <taxon>Pongo</taxon>
    </lineage>
</organism>
<protein>
    <recommendedName>
        <fullName>NADH dehydrogenase [ubiquinone] 1 subunit C1, mitochondrial</fullName>
    </recommendedName>
    <alternativeName>
        <fullName>Complex I-KFYI</fullName>
        <shortName>CI-KFYI</shortName>
    </alternativeName>
    <alternativeName>
        <fullName>NADH-ubiquinone oxidoreductase KFYI subunit</fullName>
    </alternativeName>
</protein>
<dbReference type="EMBL" id="CR859771">
    <property type="protein sequence ID" value="CAH91929.1"/>
    <property type="molecule type" value="mRNA"/>
</dbReference>
<dbReference type="EMBL" id="CR860100">
    <property type="protein sequence ID" value="CAH92245.1"/>
    <property type="molecule type" value="mRNA"/>
</dbReference>
<dbReference type="RefSeq" id="NP_001127482.1">
    <property type="nucleotide sequence ID" value="NM_001134010.1"/>
</dbReference>
<dbReference type="SMR" id="P0CB69"/>
<dbReference type="FunCoup" id="P0CB69">
    <property type="interactions" value="353"/>
</dbReference>
<dbReference type="STRING" id="9601.ENSPPYP00000016836"/>
<dbReference type="GeneID" id="100174556"/>
<dbReference type="KEGG" id="pon:100174556"/>
<dbReference type="CTD" id="4717"/>
<dbReference type="eggNOG" id="ENOG502SFTF">
    <property type="taxonomic scope" value="Eukaryota"/>
</dbReference>
<dbReference type="InParanoid" id="P0CB69"/>
<dbReference type="OrthoDB" id="9900059at2759"/>
<dbReference type="Proteomes" id="UP000001595">
    <property type="component" value="Unplaced"/>
</dbReference>
<dbReference type="GO" id="GO:0005743">
    <property type="term" value="C:mitochondrial inner membrane"/>
    <property type="evidence" value="ECO:0007669"/>
    <property type="project" value="UniProtKB-SubCell"/>
</dbReference>
<dbReference type="GO" id="GO:0045271">
    <property type="term" value="C:respiratory chain complex I"/>
    <property type="evidence" value="ECO:0000250"/>
    <property type="project" value="UniProtKB"/>
</dbReference>
<dbReference type="InterPro" id="IPR026192">
    <property type="entry name" value="NDUFC1"/>
</dbReference>
<dbReference type="PANTHER" id="PTHR17097:SF0">
    <property type="entry name" value="NADH DEHYDROGENASE [UBIQUINONE] 1 SUBUNIT C1, MITOCHONDRIAL"/>
    <property type="match status" value="1"/>
</dbReference>
<dbReference type="PANTHER" id="PTHR17097">
    <property type="entry name" value="NADH-UBIQUINONE OXIDOREDUCTASE KFYI SUBUNIT"/>
    <property type="match status" value="1"/>
</dbReference>
<dbReference type="Pfam" id="PF15088">
    <property type="entry name" value="NADH_dh_m_C1"/>
    <property type="match status" value="1"/>
</dbReference>
<name>NDUC1_PONAB</name>
<reference key="1">
    <citation type="submission" date="2004-11" db="EMBL/GenBank/DDBJ databases">
        <authorList>
            <consortium name="The German cDNA consortium"/>
        </authorList>
    </citation>
    <scope>NUCLEOTIDE SEQUENCE [LARGE SCALE MRNA]</scope>
    <source>
        <tissue>Heart</tissue>
    </source>
</reference>